<comment type="miscellaneous">
    <text>Was identified as a high-confidence drug target.</text>
</comment>
<comment type="similarity">
    <text evidence="2">Belongs to the TRAFAC class translation factor GTPase superfamily. Classic translation factor GTPase family. EF-G/EF-2 subfamily.</text>
</comment>
<feature type="chain" id="PRO_0000091276" description="Elongation factor G-like protein">
    <location>
        <begin position="1"/>
        <end position="714"/>
    </location>
</feature>
<feature type="domain" description="tr-type G" evidence="2">
    <location>
        <begin position="21"/>
        <end position="289"/>
    </location>
</feature>
<feature type="region of interest" description="G1" evidence="2">
    <location>
        <begin position="30"/>
        <end position="37"/>
    </location>
</feature>
<feature type="region of interest" description="G2" evidence="2">
    <location>
        <begin position="73"/>
        <end position="77"/>
    </location>
</feature>
<feature type="region of interest" description="G3" evidence="2">
    <location>
        <begin position="94"/>
        <end position="97"/>
    </location>
</feature>
<feature type="region of interest" description="G4" evidence="2">
    <location>
        <begin position="148"/>
        <end position="151"/>
    </location>
</feature>
<feature type="region of interest" description="G5" evidence="2">
    <location>
        <begin position="267"/>
        <end position="269"/>
    </location>
</feature>
<feature type="binding site" evidence="1">
    <location>
        <begin position="30"/>
        <end position="37"/>
    </location>
    <ligand>
        <name>GTP</name>
        <dbReference type="ChEBI" id="CHEBI:37565"/>
    </ligand>
</feature>
<feature type="binding site" evidence="1">
    <location>
        <begin position="94"/>
        <end position="98"/>
    </location>
    <ligand>
        <name>GTP</name>
        <dbReference type="ChEBI" id="CHEBI:37565"/>
    </ligand>
</feature>
<feature type="binding site" evidence="1">
    <location>
        <begin position="148"/>
        <end position="151"/>
    </location>
    <ligand>
        <name>GTP</name>
        <dbReference type="ChEBI" id="CHEBI:37565"/>
    </ligand>
</feature>
<gene>
    <name type="ordered locus">Rv0120c</name>
    <name type="ORF">MTCI418B.02c</name>
</gene>
<organism>
    <name type="scientific">Mycobacterium tuberculosis (strain ATCC 25618 / H37Rv)</name>
    <dbReference type="NCBI Taxonomy" id="83332"/>
    <lineage>
        <taxon>Bacteria</taxon>
        <taxon>Bacillati</taxon>
        <taxon>Actinomycetota</taxon>
        <taxon>Actinomycetes</taxon>
        <taxon>Mycobacteriales</taxon>
        <taxon>Mycobacteriaceae</taxon>
        <taxon>Mycobacterium</taxon>
        <taxon>Mycobacterium tuberculosis complex</taxon>
    </lineage>
</organism>
<evidence type="ECO:0000250" key="1"/>
<evidence type="ECO:0000255" key="2">
    <source>
        <dbReference type="PROSITE-ProRule" id="PRU01059"/>
    </source>
</evidence>
<keyword id="KW-0342">GTP-binding</keyword>
<keyword id="KW-0547">Nucleotide-binding</keyword>
<keyword id="KW-1185">Reference proteome</keyword>
<name>EFGL_MYCTU</name>
<sequence>MADRVNASQGAAAAPTANGPGGVRNVVLVGPSGGGKTTLIEALLVAAKVLSRPGSVTEGTTVCDFDEAEIRQQRSVGLAVASLAYDGIKVNLVDTPGYADFVGELRAGLRAADCALFVIAANEGVDEPTKSLWQECSQVGMPRAVVITKLDHARANYREALTAAQDAFGDKVLPLYLPSGDGLIGLLSQALYEYADGKRTTRTPAESDTERIEEARGALIEGIIEESEDESLMERYLGGETIDESVLIQDLEKAVARGSFFPVIPVCSSTGVGTLELLEVATRGFPSPMEHPLPEVFTPQGVPHAELACDNDAPLLAEVVKTTSDPYVGRVSLVRVFSGTIRPDTTVHVSGHFSSFFGGGTSNTHPDHDEDERIGVLSFPLGKQQRPAAAVVAGDICAIGKLSRAETGDTLSDKAEPLVLKPWTMPEPLLPIAIAAHAKTDEDKLSVGLGRLAAEDPTLRIEQNQETHQVVLWCMGEAHAGVVLDTLANRYGVSVDTIELRVPLRETFAGNAKGHGRHIKQSGGHGQYGVCDIEVEPLPEGSGFEFLDKVVGGAVPRQFIPNVEKGVRAQMDKGVHAGYPVVDIRVTLLDGKAHSVDSSDFAFQMAGALALREAAAATKVILLEPIDEISVLVPDDFVGAVLGDLSSRRGRVLGTETAGHDRTVIKAEVPQVELTRYAIDLRSLAHGAASFTRSFARYEPMPESAAARVKAGAG</sequence>
<accession>P9WNM9</accession>
<accession>L0T2N7</accession>
<accession>O07170</accession>
<protein>
    <recommendedName>
        <fullName>Elongation factor G-like protein</fullName>
    </recommendedName>
</protein>
<reference key="1">
    <citation type="journal article" date="1998" name="Nature">
        <title>Deciphering the biology of Mycobacterium tuberculosis from the complete genome sequence.</title>
        <authorList>
            <person name="Cole S.T."/>
            <person name="Brosch R."/>
            <person name="Parkhill J."/>
            <person name="Garnier T."/>
            <person name="Churcher C.M."/>
            <person name="Harris D.E."/>
            <person name="Gordon S.V."/>
            <person name="Eiglmeier K."/>
            <person name="Gas S."/>
            <person name="Barry C.E. III"/>
            <person name="Tekaia F."/>
            <person name="Badcock K."/>
            <person name="Basham D."/>
            <person name="Brown D."/>
            <person name="Chillingworth T."/>
            <person name="Connor R."/>
            <person name="Davies R.M."/>
            <person name="Devlin K."/>
            <person name="Feltwell T."/>
            <person name="Gentles S."/>
            <person name="Hamlin N."/>
            <person name="Holroyd S."/>
            <person name="Hornsby T."/>
            <person name="Jagels K."/>
            <person name="Krogh A."/>
            <person name="McLean J."/>
            <person name="Moule S."/>
            <person name="Murphy L.D."/>
            <person name="Oliver S."/>
            <person name="Osborne J."/>
            <person name="Quail M.A."/>
            <person name="Rajandream M.A."/>
            <person name="Rogers J."/>
            <person name="Rutter S."/>
            <person name="Seeger K."/>
            <person name="Skelton S."/>
            <person name="Squares S."/>
            <person name="Squares R."/>
            <person name="Sulston J.E."/>
            <person name="Taylor K."/>
            <person name="Whitehead S."/>
            <person name="Barrell B.G."/>
        </authorList>
    </citation>
    <scope>NUCLEOTIDE SEQUENCE [LARGE SCALE GENOMIC DNA]</scope>
    <source>
        <strain>ATCC 25618 / H37Rv</strain>
    </source>
</reference>
<reference key="2">
    <citation type="journal article" date="2008" name="BMC Syst. Biol.">
        <title>targetTB: a target identification pipeline for Mycobacterium tuberculosis through an interactome, reactome and genome-scale structural analysis.</title>
        <authorList>
            <person name="Raman K."/>
            <person name="Yeturu K."/>
            <person name="Chandra N."/>
        </authorList>
    </citation>
    <scope>IDENTIFICATION AS A DRUG TARGET [LARGE SCALE ANALYSIS]</scope>
</reference>
<reference key="3">
    <citation type="journal article" date="2011" name="Mol. Cell. Proteomics">
        <title>Proteogenomic analysis of Mycobacterium tuberculosis by high resolution mass spectrometry.</title>
        <authorList>
            <person name="Kelkar D.S."/>
            <person name="Kumar D."/>
            <person name="Kumar P."/>
            <person name="Balakrishnan L."/>
            <person name="Muthusamy B."/>
            <person name="Yadav A.K."/>
            <person name="Shrivastava P."/>
            <person name="Marimuthu A."/>
            <person name="Anand S."/>
            <person name="Sundaram H."/>
            <person name="Kingsbury R."/>
            <person name="Harsha H.C."/>
            <person name="Nair B."/>
            <person name="Prasad T.S."/>
            <person name="Chauhan D.S."/>
            <person name="Katoch K."/>
            <person name="Katoch V.M."/>
            <person name="Kumar P."/>
            <person name="Chaerkady R."/>
            <person name="Ramachandran S."/>
            <person name="Dash D."/>
            <person name="Pandey A."/>
        </authorList>
    </citation>
    <scope>IDENTIFICATION BY MASS SPECTROMETRY [LARGE SCALE ANALYSIS]</scope>
    <source>
        <strain>ATCC 25618 / H37Rv</strain>
    </source>
</reference>
<proteinExistence type="evidence at protein level"/>
<dbReference type="EMBL" id="AL123456">
    <property type="protein sequence ID" value="CCP42845.1"/>
    <property type="molecule type" value="Genomic_DNA"/>
</dbReference>
<dbReference type="PIR" id="A70983">
    <property type="entry name" value="A70983"/>
</dbReference>
<dbReference type="RefSeq" id="WP_003916609.1">
    <property type="nucleotide sequence ID" value="NZ_NVQJ01000062.1"/>
</dbReference>
<dbReference type="SMR" id="P9WNM9"/>
<dbReference type="STRING" id="83332.Rv0120c"/>
<dbReference type="PaxDb" id="83332-Rv0120c"/>
<dbReference type="DNASU" id="886894"/>
<dbReference type="KEGG" id="mtu:Rv0120c"/>
<dbReference type="KEGG" id="mtv:RVBD_0120c"/>
<dbReference type="TubercuList" id="Rv0120c"/>
<dbReference type="eggNOG" id="COG0480">
    <property type="taxonomic scope" value="Bacteria"/>
</dbReference>
<dbReference type="InParanoid" id="P9WNM9"/>
<dbReference type="OrthoDB" id="9801472at2"/>
<dbReference type="PhylomeDB" id="P9WNM9"/>
<dbReference type="Proteomes" id="UP000001584">
    <property type="component" value="Chromosome"/>
</dbReference>
<dbReference type="GO" id="GO:0009274">
    <property type="term" value="C:peptidoglycan-based cell wall"/>
    <property type="evidence" value="ECO:0007005"/>
    <property type="project" value="MTBBASE"/>
</dbReference>
<dbReference type="GO" id="GO:0005886">
    <property type="term" value="C:plasma membrane"/>
    <property type="evidence" value="ECO:0007005"/>
    <property type="project" value="MTBBASE"/>
</dbReference>
<dbReference type="GO" id="GO:0005525">
    <property type="term" value="F:GTP binding"/>
    <property type="evidence" value="ECO:0007669"/>
    <property type="project" value="UniProtKB-KW"/>
</dbReference>
<dbReference type="GO" id="GO:0003924">
    <property type="term" value="F:GTPase activity"/>
    <property type="evidence" value="ECO:0007669"/>
    <property type="project" value="InterPro"/>
</dbReference>
<dbReference type="GO" id="GO:0003746">
    <property type="term" value="F:translation elongation factor activity"/>
    <property type="evidence" value="ECO:0007669"/>
    <property type="project" value="InterPro"/>
</dbReference>
<dbReference type="GO" id="GO:0032790">
    <property type="term" value="P:ribosome disassembly"/>
    <property type="evidence" value="ECO:0000318"/>
    <property type="project" value="GO_Central"/>
</dbReference>
<dbReference type="CDD" id="cd16262">
    <property type="entry name" value="EFG_III"/>
    <property type="match status" value="1"/>
</dbReference>
<dbReference type="CDD" id="cd01434">
    <property type="entry name" value="EFG_mtEFG1_IV"/>
    <property type="match status" value="1"/>
</dbReference>
<dbReference type="CDD" id="cd03713">
    <property type="entry name" value="EFG_mtEFG_C"/>
    <property type="match status" value="1"/>
</dbReference>
<dbReference type="FunFam" id="3.30.230.10:FF:000003">
    <property type="entry name" value="Elongation factor G"/>
    <property type="match status" value="1"/>
</dbReference>
<dbReference type="FunFam" id="3.30.70.240:FF:000012">
    <property type="entry name" value="Elongation factor G"/>
    <property type="match status" value="1"/>
</dbReference>
<dbReference type="FunFam" id="2.40.30.10:FF:000151">
    <property type="entry name" value="Translation elongation factor EF-G"/>
    <property type="match status" value="1"/>
</dbReference>
<dbReference type="Gene3D" id="3.30.230.10">
    <property type="match status" value="1"/>
</dbReference>
<dbReference type="Gene3D" id="3.30.70.240">
    <property type="match status" value="1"/>
</dbReference>
<dbReference type="Gene3D" id="3.30.70.870">
    <property type="entry name" value="Elongation Factor G (Translational Gtpase), domain 3"/>
    <property type="match status" value="1"/>
</dbReference>
<dbReference type="Gene3D" id="3.40.50.300">
    <property type="entry name" value="P-loop containing nucleotide triphosphate hydrolases"/>
    <property type="match status" value="1"/>
</dbReference>
<dbReference type="Gene3D" id="2.40.30.10">
    <property type="entry name" value="Translation factors"/>
    <property type="match status" value="1"/>
</dbReference>
<dbReference type="InterPro" id="IPR041095">
    <property type="entry name" value="EFG_II"/>
</dbReference>
<dbReference type="InterPro" id="IPR009022">
    <property type="entry name" value="EFG_III"/>
</dbReference>
<dbReference type="InterPro" id="IPR035647">
    <property type="entry name" value="EFG_III/V"/>
</dbReference>
<dbReference type="InterPro" id="IPR047872">
    <property type="entry name" value="EFG_IV"/>
</dbReference>
<dbReference type="InterPro" id="IPR035649">
    <property type="entry name" value="EFG_V"/>
</dbReference>
<dbReference type="InterPro" id="IPR000640">
    <property type="entry name" value="EFG_V-like"/>
</dbReference>
<dbReference type="InterPro" id="IPR004161">
    <property type="entry name" value="EFTu-like_2"/>
</dbReference>
<dbReference type="InterPro" id="IPR027417">
    <property type="entry name" value="P-loop_NTPase"/>
</dbReference>
<dbReference type="InterPro" id="IPR020568">
    <property type="entry name" value="Ribosomal_Su5_D2-typ_SF"/>
</dbReference>
<dbReference type="InterPro" id="IPR014721">
    <property type="entry name" value="Ribsml_uS5_D2-typ_fold_subgr"/>
</dbReference>
<dbReference type="InterPro" id="IPR005225">
    <property type="entry name" value="Small_GTP-bd"/>
</dbReference>
<dbReference type="InterPro" id="IPR000795">
    <property type="entry name" value="T_Tr_GTP-bd_dom"/>
</dbReference>
<dbReference type="InterPro" id="IPR009000">
    <property type="entry name" value="Transl_B-barrel_sf"/>
</dbReference>
<dbReference type="InterPro" id="IPR005517">
    <property type="entry name" value="Transl_elong_EFG/EF2_IV"/>
</dbReference>
<dbReference type="NCBIfam" id="NF009377">
    <property type="entry name" value="PRK12740.1-1"/>
    <property type="match status" value="1"/>
</dbReference>
<dbReference type="NCBIfam" id="NF009381">
    <property type="entry name" value="PRK12740.1-5"/>
    <property type="match status" value="1"/>
</dbReference>
<dbReference type="NCBIfam" id="TIGR00231">
    <property type="entry name" value="small_GTP"/>
    <property type="match status" value="1"/>
</dbReference>
<dbReference type="PANTHER" id="PTHR43261:SF6">
    <property type="entry name" value="ELONGATION FACTOR G-LIKE PROTEIN"/>
    <property type="match status" value="1"/>
</dbReference>
<dbReference type="PANTHER" id="PTHR43261">
    <property type="entry name" value="TRANSLATION ELONGATION FACTOR G-RELATED"/>
    <property type="match status" value="1"/>
</dbReference>
<dbReference type="Pfam" id="PF00679">
    <property type="entry name" value="EFG_C"/>
    <property type="match status" value="1"/>
</dbReference>
<dbReference type="Pfam" id="PF14492">
    <property type="entry name" value="EFG_III"/>
    <property type="match status" value="1"/>
</dbReference>
<dbReference type="Pfam" id="PF03764">
    <property type="entry name" value="EFG_IV"/>
    <property type="match status" value="1"/>
</dbReference>
<dbReference type="Pfam" id="PF00009">
    <property type="entry name" value="GTP_EFTU"/>
    <property type="match status" value="1"/>
</dbReference>
<dbReference type="Pfam" id="PF03144">
    <property type="entry name" value="GTP_EFTU_D2"/>
    <property type="match status" value="1"/>
</dbReference>
<dbReference type="SMART" id="SM00838">
    <property type="entry name" value="EFG_C"/>
    <property type="match status" value="1"/>
</dbReference>
<dbReference type="SMART" id="SM00889">
    <property type="entry name" value="EFG_IV"/>
    <property type="match status" value="1"/>
</dbReference>
<dbReference type="SUPFAM" id="SSF54980">
    <property type="entry name" value="EF-G C-terminal domain-like"/>
    <property type="match status" value="2"/>
</dbReference>
<dbReference type="SUPFAM" id="SSF52540">
    <property type="entry name" value="P-loop containing nucleoside triphosphate hydrolases"/>
    <property type="match status" value="1"/>
</dbReference>
<dbReference type="SUPFAM" id="SSF54211">
    <property type="entry name" value="Ribosomal protein S5 domain 2-like"/>
    <property type="match status" value="1"/>
</dbReference>
<dbReference type="SUPFAM" id="SSF50447">
    <property type="entry name" value="Translation proteins"/>
    <property type="match status" value="1"/>
</dbReference>
<dbReference type="PROSITE" id="PS51722">
    <property type="entry name" value="G_TR_2"/>
    <property type="match status" value="1"/>
</dbReference>